<sequence length="432" mass="47253">MDISAYQHMNIRMSTRGKRPLRNLTPNDKVRAIQRIHNGETKASVSRDLGVPESTLRGWCKNEQKLRFMCRQLGPDHLGIDTHTPPEKRAKFDLQLLPPKLATLPNYDDLGLSNFLFSATEFPTQKESLFEKLSLVEFVKKNGLHPSAIRELGDTHSLNAAANAVSGVDYSTNNMINQLTLLAQLNSKLSYQMGESADTDIKSPQSTTDITDTAREENSTKTSCPLLTVKNWAKDPAKRAHFNQATQLNPNNDKNNNAVDPSYSNLTTMKYPLIMEPVKSIYPETTVSAIPPPPFSTYSDLASAASAPTTDNDCQGAALLDWCKLFNASLNFLAFAAAAASMQPAGGTIPKSTATQLPATEADETYPFNNNLVKRLSPLAHSDASNESYFDSEPEDLSVRSCASVSSRNNSRSQTPDKSTATSIACLSDGEQ</sequence>
<comment type="function">
    <text evidence="1">Probable transcription factor with a role in the retinal determination (RD) network. Regulates ato expression and is required for normal R8 induction and differentiation. Danr appears to repress Dan expression, but Dan is required for Danr expression anterior to the morphogenetic furrow (MF). Dan and Danr lie downstream of so and require dac function for highest levels of expression. Contributes to differentiation of antenna-specific characteristics; effector gene that acts downstream of homothorax (hth), Distal-less (Dll), cut (ct) and spineless (ss) genes to control differentiation of distal antennal structures (By similarity).</text>
</comment>
<comment type="subunit">
    <text evidence="1">Interacts with itself, dan, ey and dac to form a complex (or complexes) containing the RD factors.</text>
</comment>
<comment type="subcellular location">
    <subcellularLocation>
        <location evidence="1 2">Nucleus</location>
    </subcellularLocation>
</comment>
<dbReference type="EMBL" id="CH475399">
    <property type="protein sequence ID" value="EAL29349.2"/>
    <property type="molecule type" value="Genomic_DNA"/>
</dbReference>
<dbReference type="RefSeq" id="XP_001352380.2">
    <property type="nucleotide sequence ID" value="XM_001352344.3"/>
</dbReference>
<dbReference type="SMR" id="Q29CW0"/>
<dbReference type="FunCoup" id="Q29CW0">
    <property type="interactions" value="64"/>
</dbReference>
<dbReference type="EnsemblMetazoa" id="FBtr0286934">
    <property type="protein sequence ID" value="FBpp0285372"/>
    <property type="gene ID" value="FBgn0072483"/>
</dbReference>
<dbReference type="GeneID" id="4811819"/>
<dbReference type="KEGG" id="dpo:4811819"/>
<dbReference type="CTD" id="43020"/>
<dbReference type="eggNOG" id="ENOG502S5K1">
    <property type="taxonomic scope" value="Eukaryota"/>
</dbReference>
<dbReference type="HOGENOM" id="CLU_655994_0_0_1"/>
<dbReference type="InParanoid" id="Q29CW0"/>
<dbReference type="OMA" id="KNWAKDP"/>
<dbReference type="Proteomes" id="UP000001819">
    <property type="component" value="Chromosome 2"/>
</dbReference>
<dbReference type="Bgee" id="FBgn0072483">
    <property type="expression patterns" value="Expressed in insect adult head and 1 other cell type or tissue"/>
</dbReference>
<dbReference type="GO" id="GO:0005634">
    <property type="term" value="C:nucleus"/>
    <property type="evidence" value="ECO:0000250"/>
    <property type="project" value="UniProtKB"/>
</dbReference>
<dbReference type="GO" id="GO:0003677">
    <property type="term" value="F:DNA binding"/>
    <property type="evidence" value="ECO:0007669"/>
    <property type="project" value="UniProtKB-KW"/>
</dbReference>
<dbReference type="GO" id="GO:0003700">
    <property type="term" value="F:DNA-binding transcription factor activity"/>
    <property type="evidence" value="ECO:0000250"/>
    <property type="project" value="UniProtKB"/>
</dbReference>
<dbReference type="GO" id="GO:0007469">
    <property type="term" value="P:antennal development"/>
    <property type="evidence" value="ECO:0000250"/>
    <property type="project" value="UniProtKB"/>
</dbReference>
<dbReference type="GO" id="GO:0048749">
    <property type="term" value="P:compound eye development"/>
    <property type="evidence" value="ECO:0000250"/>
    <property type="project" value="UniProtKB"/>
</dbReference>
<dbReference type="GO" id="GO:0006355">
    <property type="term" value="P:regulation of DNA-templated transcription"/>
    <property type="evidence" value="ECO:0000250"/>
    <property type="project" value="UniProtKB"/>
</dbReference>
<dbReference type="GO" id="GO:0007379">
    <property type="term" value="P:segment specification"/>
    <property type="evidence" value="ECO:0000250"/>
    <property type="project" value="UniProtKB"/>
</dbReference>
<dbReference type="FunFam" id="1.10.10.10:FF:000293">
    <property type="entry name" value="Tigger transposable element-derived protein 5"/>
    <property type="match status" value="1"/>
</dbReference>
<dbReference type="Gene3D" id="1.10.10.10">
    <property type="entry name" value="Winged helix-like DNA-binding domain superfamily/Winged helix DNA-binding domain"/>
    <property type="match status" value="1"/>
</dbReference>
<dbReference type="InterPro" id="IPR009057">
    <property type="entry name" value="Homeodomain-like_sf"/>
</dbReference>
<dbReference type="InterPro" id="IPR007889">
    <property type="entry name" value="HTH_Psq"/>
</dbReference>
<dbReference type="InterPro" id="IPR051839">
    <property type="entry name" value="RD_transcriptional_regulator"/>
</dbReference>
<dbReference type="InterPro" id="IPR036388">
    <property type="entry name" value="WH-like_DNA-bd_sf"/>
</dbReference>
<dbReference type="PANTHER" id="PTHR33215">
    <property type="entry name" value="PROTEIN DISTAL ANTENNA"/>
    <property type="match status" value="1"/>
</dbReference>
<dbReference type="PANTHER" id="PTHR33215:SF13">
    <property type="entry name" value="PROTEIN DISTAL ANTENNA"/>
    <property type="match status" value="1"/>
</dbReference>
<dbReference type="Pfam" id="PF04218">
    <property type="entry name" value="CENP-B_N"/>
    <property type="match status" value="1"/>
</dbReference>
<dbReference type="SUPFAM" id="SSF46689">
    <property type="entry name" value="Homeodomain-like"/>
    <property type="match status" value="1"/>
</dbReference>
<dbReference type="PROSITE" id="PS50960">
    <property type="entry name" value="HTH_PSQ"/>
    <property type="match status" value="1"/>
</dbReference>
<reference key="1">
    <citation type="journal article" date="2005" name="Genome Res.">
        <title>Comparative genome sequencing of Drosophila pseudoobscura: chromosomal, gene, and cis-element evolution.</title>
        <authorList>
            <person name="Richards S."/>
            <person name="Liu Y."/>
            <person name="Bettencourt B.R."/>
            <person name="Hradecky P."/>
            <person name="Letovsky S."/>
            <person name="Nielsen R."/>
            <person name="Thornton K."/>
            <person name="Hubisz M.J."/>
            <person name="Chen R."/>
            <person name="Meisel R.P."/>
            <person name="Couronne O."/>
            <person name="Hua S."/>
            <person name="Smith M.A."/>
            <person name="Zhang P."/>
            <person name="Liu J."/>
            <person name="Bussemaker H.J."/>
            <person name="van Batenburg M.F."/>
            <person name="Howells S.L."/>
            <person name="Scherer S.E."/>
            <person name="Sodergren E."/>
            <person name="Matthews B.B."/>
            <person name="Crosby M.A."/>
            <person name="Schroeder A.J."/>
            <person name="Ortiz-Barrientos D."/>
            <person name="Rives C.M."/>
            <person name="Metzker M.L."/>
            <person name="Muzny D.M."/>
            <person name="Scott G."/>
            <person name="Steffen D."/>
            <person name="Wheeler D.A."/>
            <person name="Worley K.C."/>
            <person name="Havlak P."/>
            <person name="Durbin K.J."/>
            <person name="Egan A."/>
            <person name="Gill R."/>
            <person name="Hume J."/>
            <person name="Morgan M.B."/>
            <person name="Miner G."/>
            <person name="Hamilton C."/>
            <person name="Huang Y."/>
            <person name="Waldron L."/>
            <person name="Verduzco D."/>
            <person name="Clerc-Blankenburg K.P."/>
            <person name="Dubchak I."/>
            <person name="Noor M.A.F."/>
            <person name="Anderson W."/>
            <person name="White K.P."/>
            <person name="Clark A.G."/>
            <person name="Schaeffer S.W."/>
            <person name="Gelbart W.M."/>
            <person name="Weinstock G.M."/>
            <person name="Gibbs R.A."/>
        </authorList>
    </citation>
    <scope>NUCLEOTIDE SEQUENCE [LARGE SCALE GENOMIC DNA]</scope>
    <source>
        <strain>MV2-25 / Tucson 14011-0121.94</strain>
    </source>
</reference>
<name>DANR_DROPS</name>
<keyword id="KW-0217">Developmental protein</keyword>
<keyword id="KW-0238">DNA-binding</keyword>
<keyword id="KW-0539">Nucleus</keyword>
<keyword id="KW-0597">Phosphoprotein</keyword>
<keyword id="KW-1185">Reference proteome</keyword>
<keyword id="KW-0804">Transcription</keyword>
<keyword id="KW-0805">Transcription regulation</keyword>
<feature type="chain" id="PRO_0000351203" description="Protein distal antenna-related">
    <location>
        <begin position="1"/>
        <end position="432"/>
    </location>
</feature>
<feature type="domain" description="HTH psq-type" evidence="2">
    <location>
        <begin position="15"/>
        <end position="66"/>
    </location>
</feature>
<feature type="DNA-binding region" description="H-T-H motif" evidence="2">
    <location>
        <begin position="42"/>
        <end position="62"/>
    </location>
</feature>
<feature type="region of interest" description="Disordered" evidence="3">
    <location>
        <begin position="195"/>
        <end position="221"/>
    </location>
</feature>
<feature type="region of interest" description="Disordered" evidence="3">
    <location>
        <begin position="401"/>
        <end position="432"/>
    </location>
</feature>
<feature type="compositionally biased region" description="Polar residues" evidence="3">
    <location>
        <begin position="202"/>
        <end position="211"/>
    </location>
</feature>
<feature type="compositionally biased region" description="Polar residues" evidence="3">
    <location>
        <begin position="401"/>
        <end position="425"/>
    </location>
</feature>
<evidence type="ECO:0000250" key="1">
    <source>
        <dbReference type="UniProtKB" id="Q9VBW9"/>
    </source>
</evidence>
<evidence type="ECO:0000255" key="2">
    <source>
        <dbReference type="PROSITE-ProRule" id="PRU00320"/>
    </source>
</evidence>
<evidence type="ECO:0000256" key="3">
    <source>
        <dbReference type="SAM" id="MobiDB-lite"/>
    </source>
</evidence>
<proteinExistence type="inferred from homology"/>
<gene>
    <name evidence="1" type="primary">danr</name>
    <name type="ORF">GA12437</name>
</gene>
<protein>
    <recommendedName>
        <fullName evidence="1">Protein distal antenna-related</fullName>
    </recommendedName>
</protein>
<accession>Q29CW0</accession>
<organism>
    <name type="scientific">Drosophila pseudoobscura pseudoobscura</name>
    <name type="common">Fruit fly</name>
    <dbReference type="NCBI Taxonomy" id="46245"/>
    <lineage>
        <taxon>Eukaryota</taxon>
        <taxon>Metazoa</taxon>
        <taxon>Ecdysozoa</taxon>
        <taxon>Arthropoda</taxon>
        <taxon>Hexapoda</taxon>
        <taxon>Insecta</taxon>
        <taxon>Pterygota</taxon>
        <taxon>Neoptera</taxon>
        <taxon>Endopterygota</taxon>
        <taxon>Diptera</taxon>
        <taxon>Brachycera</taxon>
        <taxon>Muscomorpha</taxon>
        <taxon>Ephydroidea</taxon>
        <taxon>Drosophilidae</taxon>
        <taxon>Drosophila</taxon>
        <taxon>Sophophora</taxon>
    </lineage>
</organism>